<dbReference type="EC" id="6.3.2.6" evidence="1"/>
<dbReference type="EMBL" id="CP000117">
    <property type="protein sequence ID" value="ABA19719.1"/>
    <property type="molecule type" value="Genomic_DNA"/>
</dbReference>
<dbReference type="SMR" id="Q3MH17"/>
<dbReference type="STRING" id="240292.Ava_0093"/>
<dbReference type="KEGG" id="ava:Ava_0093"/>
<dbReference type="eggNOG" id="COG0152">
    <property type="taxonomic scope" value="Bacteria"/>
</dbReference>
<dbReference type="HOGENOM" id="CLU_061495_2_0_3"/>
<dbReference type="UniPathway" id="UPA00074">
    <property type="reaction ID" value="UER00131"/>
</dbReference>
<dbReference type="Proteomes" id="UP000002533">
    <property type="component" value="Chromosome"/>
</dbReference>
<dbReference type="GO" id="GO:0005524">
    <property type="term" value="F:ATP binding"/>
    <property type="evidence" value="ECO:0007669"/>
    <property type="project" value="UniProtKB-KW"/>
</dbReference>
<dbReference type="GO" id="GO:0004639">
    <property type="term" value="F:phosphoribosylaminoimidazolesuccinocarboxamide synthase activity"/>
    <property type="evidence" value="ECO:0007669"/>
    <property type="project" value="UniProtKB-UniRule"/>
</dbReference>
<dbReference type="GO" id="GO:0006189">
    <property type="term" value="P:'de novo' IMP biosynthetic process"/>
    <property type="evidence" value="ECO:0007669"/>
    <property type="project" value="UniProtKB-UniRule"/>
</dbReference>
<dbReference type="GO" id="GO:0009236">
    <property type="term" value="P:cobalamin biosynthetic process"/>
    <property type="evidence" value="ECO:0007669"/>
    <property type="project" value="InterPro"/>
</dbReference>
<dbReference type="CDD" id="cd01415">
    <property type="entry name" value="SAICAR_synt_PurC"/>
    <property type="match status" value="1"/>
</dbReference>
<dbReference type="FunFam" id="3.30.470.20:FF:000006">
    <property type="entry name" value="Phosphoribosylaminoimidazole-succinocarboxamide synthase"/>
    <property type="match status" value="1"/>
</dbReference>
<dbReference type="Gene3D" id="3.30.470.20">
    <property type="entry name" value="ATP-grasp fold, B domain"/>
    <property type="match status" value="1"/>
</dbReference>
<dbReference type="Gene3D" id="3.30.200.20">
    <property type="entry name" value="Phosphorylase Kinase, domain 1"/>
    <property type="match status" value="1"/>
</dbReference>
<dbReference type="HAMAP" id="MF_00137">
    <property type="entry name" value="SAICAR_synth"/>
    <property type="match status" value="1"/>
</dbReference>
<dbReference type="InterPro" id="IPR028923">
    <property type="entry name" value="SAICAR_synt/ADE2_N"/>
</dbReference>
<dbReference type="InterPro" id="IPR033934">
    <property type="entry name" value="SAICAR_synt_PurC"/>
</dbReference>
<dbReference type="InterPro" id="IPR001636">
    <property type="entry name" value="SAICAR_synth"/>
</dbReference>
<dbReference type="InterPro" id="IPR050089">
    <property type="entry name" value="SAICAR_synthetase"/>
</dbReference>
<dbReference type="InterPro" id="IPR018236">
    <property type="entry name" value="SAICAR_synthetase_CS"/>
</dbReference>
<dbReference type="NCBIfam" id="TIGR00081">
    <property type="entry name" value="purC"/>
    <property type="match status" value="1"/>
</dbReference>
<dbReference type="PANTHER" id="PTHR43599">
    <property type="entry name" value="MULTIFUNCTIONAL PROTEIN ADE2"/>
    <property type="match status" value="1"/>
</dbReference>
<dbReference type="PANTHER" id="PTHR43599:SF3">
    <property type="entry name" value="SI:DKEY-6E2.2"/>
    <property type="match status" value="1"/>
</dbReference>
<dbReference type="Pfam" id="PF01259">
    <property type="entry name" value="SAICAR_synt"/>
    <property type="match status" value="1"/>
</dbReference>
<dbReference type="SUPFAM" id="SSF56104">
    <property type="entry name" value="SAICAR synthase-like"/>
    <property type="match status" value="1"/>
</dbReference>
<dbReference type="PROSITE" id="PS01057">
    <property type="entry name" value="SAICAR_SYNTHETASE_1"/>
    <property type="match status" value="1"/>
</dbReference>
<dbReference type="PROSITE" id="PS01058">
    <property type="entry name" value="SAICAR_SYNTHETASE_2"/>
    <property type="match status" value="1"/>
</dbReference>
<proteinExistence type="inferred from homology"/>
<keyword id="KW-0067">ATP-binding</keyword>
<keyword id="KW-0436">Ligase</keyword>
<keyword id="KW-0547">Nucleotide-binding</keyword>
<keyword id="KW-0658">Purine biosynthesis</keyword>
<reference key="1">
    <citation type="journal article" date="2014" name="Stand. Genomic Sci.">
        <title>Complete genome sequence of Anabaena variabilis ATCC 29413.</title>
        <authorList>
            <person name="Thiel T."/>
            <person name="Pratte B.S."/>
            <person name="Zhong J."/>
            <person name="Goodwin L."/>
            <person name="Copeland A."/>
            <person name="Lucas S."/>
            <person name="Han C."/>
            <person name="Pitluck S."/>
            <person name="Land M.L."/>
            <person name="Kyrpides N.C."/>
            <person name="Woyke T."/>
        </authorList>
    </citation>
    <scope>NUCLEOTIDE SEQUENCE [LARGE SCALE GENOMIC DNA]</scope>
    <source>
        <strain>ATCC 29413 / PCC 7937</strain>
    </source>
</reference>
<name>PUR7_TRIV2</name>
<evidence type="ECO:0000255" key="1">
    <source>
        <dbReference type="HAMAP-Rule" id="MF_00137"/>
    </source>
</evidence>
<organism>
    <name type="scientific">Trichormus variabilis (strain ATCC 29413 / PCC 7937)</name>
    <name type="common">Anabaena variabilis</name>
    <dbReference type="NCBI Taxonomy" id="240292"/>
    <lineage>
        <taxon>Bacteria</taxon>
        <taxon>Bacillati</taxon>
        <taxon>Cyanobacteriota</taxon>
        <taxon>Cyanophyceae</taxon>
        <taxon>Nostocales</taxon>
        <taxon>Nostocaceae</taxon>
        <taxon>Trichormus</taxon>
    </lineage>
</organism>
<sequence length="245" mass="27756">MSVHSKLYEGKAKILYTTDEPEVLLADFKDDATAFNAQKRGSILGKGRINCSISSQLFQQLEASGIKTHFIDSPSPNQMRVKAVKIIPIEVVIRNIAAGSLSQQTGIELGTVLKQPLVEFYYKNDQLGDPLLTRDRLLLMELATAEQVEEITHLALQINDFLKNFWQNCGITLVDFKLEFGLDSQQQILLADEISPDTCRLWNTTEADPNRRVMDKDRFRRDLGNVEDAYQEVLQRVLTAVEIKN</sequence>
<accession>Q3MH17</accession>
<feature type="chain" id="PRO_1000018662" description="Phosphoribosylaminoimidazole-succinocarboxamide synthase">
    <location>
        <begin position="1"/>
        <end position="245"/>
    </location>
</feature>
<gene>
    <name evidence="1" type="primary">purC</name>
    <name type="ordered locus">Ava_0093</name>
</gene>
<comment type="catalytic activity">
    <reaction evidence="1">
        <text>5-amino-1-(5-phospho-D-ribosyl)imidazole-4-carboxylate + L-aspartate + ATP = (2S)-2-[5-amino-1-(5-phospho-beta-D-ribosyl)imidazole-4-carboxamido]succinate + ADP + phosphate + 2 H(+)</text>
        <dbReference type="Rhea" id="RHEA:22628"/>
        <dbReference type="ChEBI" id="CHEBI:15378"/>
        <dbReference type="ChEBI" id="CHEBI:29991"/>
        <dbReference type="ChEBI" id="CHEBI:30616"/>
        <dbReference type="ChEBI" id="CHEBI:43474"/>
        <dbReference type="ChEBI" id="CHEBI:58443"/>
        <dbReference type="ChEBI" id="CHEBI:77657"/>
        <dbReference type="ChEBI" id="CHEBI:456216"/>
        <dbReference type="EC" id="6.3.2.6"/>
    </reaction>
</comment>
<comment type="pathway">
    <text evidence="1">Purine metabolism; IMP biosynthesis via de novo pathway; 5-amino-1-(5-phospho-D-ribosyl)imidazole-4-carboxamide from 5-amino-1-(5-phospho-D-ribosyl)imidazole-4-carboxylate: step 1/2.</text>
</comment>
<comment type="similarity">
    <text evidence="1">Belongs to the SAICAR synthetase family.</text>
</comment>
<protein>
    <recommendedName>
        <fullName evidence="1">Phosphoribosylaminoimidazole-succinocarboxamide synthase</fullName>
        <ecNumber evidence="1">6.3.2.6</ecNumber>
    </recommendedName>
    <alternativeName>
        <fullName evidence="1">SAICAR synthetase</fullName>
    </alternativeName>
</protein>